<sequence>MNRYTTMRQLGDGTYGSVLMGKSNESGELVAIKRMKRKFYSWDECMNLREVKSLKKLNHANVIKLKEVIRENDHLYFIFEYMKENLYQLMKDRNKLFPESVIRNIMYQILQGLAFIHKHGFFHRDMKPENLLCMGPELVKIADFGLARELRSQPPYTDYVSTRWYRAPEVLLRSSVYSSPIDVWAVGSIMAELYTFRPLFPGTSEVDEIFKICQVLGTPKKSDWPEGYQLASSMNFRFPQCIPINLKTLIPNASSEAIQLMTEMLNWDPKKRPTASQALKHPYFQVGQVLGPSAHHLDAKQTLHKQLQPPEPKPSSSERDPKPLPNILDQPAGQPQPKQGHQPLQAIQPPQNTVVQPPPKQQGHHKQPQTMFPSIVKTIPTNPVSTVGHKGARRRWGQTVFKSGDSCDNIEDCDLGASHSKKPSMDAFKEKKKKESPFRFPEAGLPVSNHLKGENRNLHASLKSDTNLSTASTAKQYYLKQSRYLPGVNPKNVSLVAGGKDINSHSWNNQLFPKSLGSMGADLAFKRSNAAGNLGSYSAYSQTGCVPSFLKKEVGSAGQRIHLAPLGASAADYTWSTKTGQGQFSGRTYNPTAKNLNIVNRTQPVPSVHGRTDWVAKYGGHR</sequence>
<name>MAK_RAT</name>
<reference key="1">
    <citation type="journal article" date="1990" name="Mol. Cell. Biol.">
        <title>A novel mammalian protein kinase gene (mak) is highly expressed in testicular germ cells at and after meiosis.</title>
        <authorList>
            <person name="Matsushime H."/>
            <person name="Jinno A."/>
            <person name="Takagi N."/>
            <person name="Shibuya M."/>
        </authorList>
    </citation>
    <scope>NUCLEOTIDE SEQUENCE [MRNA] (ISOFORM 1)</scope>
    <scope>FUNCTION</scope>
    <scope>TISSUE SPECIFICITY</scope>
    <source>
        <tissue>Testis</tissue>
    </source>
</reference>
<reference key="2">
    <citation type="journal article" date="2004" name="Nature">
        <title>Genome sequence of the Brown Norway rat yields insights into mammalian evolution.</title>
        <authorList>
            <person name="Gibbs R.A."/>
            <person name="Weinstock G.M."/>
            <person name="Metzker M.L."/>
            <person name="Muzny D.M."/>
            <person name="Sodergren E.J."/>
            <person name="Scherer S."/>
            <person name="Scott G."/>
            <person name="Steffen D."/>
            <person name="Worley K.C."/>
            <person name="Burch P.E."/>
            <person name="Okwuonu G."/>
            <person name="Hines S."/>
            <person name="Lewis L."/>
            <person name="Deramo C."/>
            <person name="Delgado O."/>
            <person name="Dugan-Rocha S."/>
            <person name="Miner G."/>
            <person name="Morgan M."/>
            <person name="Hawes A."/>
            <person name="Gill R."/>
            <person name="Holt R.A."/>
            <person name="Adams M.D."/>
            <person name="Amanatides P.G."/>
            <person name="Baden-Tillson H."/>
            <person name="Barnstead M."/>
            <person name="Chin S."/>
            <person name="Evans C.A."/>
            <person name="Ferriera S."/>
            <person name="Fosler C."/>
            <person name="Glodek A."/>
            <person name="Gu Z."/>
            <person name="Jennings D."/>
            <person name="Kraft C.L."/>
            <person name="Nguyen T."/>
            <person name="Pfannkoch C.M."/>
            <person name="Sitter C."/>
            <person name="Sutton G.G."/>
            <person name="Venter J.C."/>
            <person name="Woodage T."/>
            <person name="Smith D."/>
            <person name="Lee H.-M."/>
            <person name="Gustafson E."/>
            <person name="Cahill P."/>
            <person name="Kana A."/>
            <person name="Doucette-Stamm L."/>
            <person name="Weinstock K."/>
            <person name="Fechtel K."/>
            <person name="Weiss R.B."/>
            <person name="Dunn D.M."/>
            <person name="Green E.D."/>
            <person name="Blakesley R.W."/>
            <person name="Bouffard G.G."/>
            <person name="De Jong P.J."/>
            <person name="Osoegawa K."/>
            <person name="Zhu B."/>
            <person name="Marra M."/>
            <person name="Schein J."/>
            <person name="Bosdet I."/>
            <person name="Fjell C."/>
            <person name="Jones S."/>
            <person name="Krzywinski M."/>
            <person name="Mathewson C."/>
            <person name="Siddiqui A."/>
            <person name="Wye N."/>
            <person name="McPherson J."/>
            <person name="Zhao S."/>
            <person name="Fraser C.M."/>
            <person name="Shetty J."/>
            <person name="Shatsman S."/>
            <person name="Geer K."/>
            <person name="Chen Y."/>
            <person name="Abramzon S."/>
            <person name="Nierman W.C."/>
            <person name="Havlak P.H."/>
            <person name="Chen R."/>
            <person name="Durbin K.J."/>
            <person name="Egan A."/>
            <person name="Ren Y."/>
            <person name="Song X.-Z."/>
            <person name="Li B."/>
            <person name="Liu Y."/>
            <person name="Qin X."/>
            <person name="Cawley S."/>
            <person name="Cooney A.J."/>
            <person name="D'Souza L.M."/>
            <person name="Martin K."/>
            <person name="Wu J.Q."/>
            <person name="Gonzalez-Garay M.L."/>
            <person name="Jackson A.R."/>
            <person name="Kalafus K.J."/>
            <person name="McLeod M.P."/>
            <person name="Milosavljevic A."/>
            <person name="Virk D."/>
            <person name="Volkov A."/>
            <person name="Wheeler D.A."/>
            <person name="Zhang Z."/>
            <person name="Bailey J.A."/>
            <person name="Eichler E.E."/>
            <person name="Tuzun E."/>
            <person name="Birney E."/>
            <person name="Mongin E."/>
            <person name="Ureta-Vidal A."/>
            <person name="Woodwark C."/>
            <person name="Zdobnov E."/>
            <person name="Bork P."/>
            <person name="Suyama M."/>
            <person name="Torrents D."/>
            <person name="Alexandersson M."/>
            <person name="Trask B.J."/>
            <person name="Young J.M."/>
            <person name="Huang H."/>
            <person name="Wang H."/>
            <person name="Xing H."/>
            <person name="Daniels S."/>
            <person name="Gietzen D."/>
            <person name="Schmidt J."/>
            <person name="Stevens K."/>
            <person name="Vitt U."/>
            <person name="Wingrove J."/>
            <person name="Camara F."/>
            <person name="Mar Alba M."/>
            <person name="Abril J.F."/>
            <person name="Guigo R."/>
            <person name="Smit A."/>
            <person name="Dubchak I."/>
            <person name="Rubin E.M."/>
            <person name="Couronne O."/>
            <person name="Poliakov A."/>
            <person name="Huebner N."/>
            <person name="Ganten D."/>
            <person name="Goesele C."/>
            <person name="Hummel O."/>
            <person name="Kreitler T."/>
            <person name="Lee Y.-A."/>
            <person name="Monti J."/>
            <person name="Schulz H."/>
            <person name="Zimdahl H."/>
            <person name="Himmelbauer H."/>
            <person name="Lehrach H."/>
            <person name="Jacob H.J."/>
            <person name="Bromberg S."/>
            <person name="Gullings-Handley J."/>
            <person name="Jensen-Seaman M.I."/>
            <person name="Kwitek A.E."/>
            <person name="Lazar J."/>
            <person name="Pasko D."/>
            <person name="Tonellato P.J."/>
            <person name="Twigger S."/>
            <person name="Ponting C.P."/>
            <person name="Duarte J.M."/>
            <person name="Rice S."/>
            <person name="Goodstadt L."/>
            <person name="Beatson S.A."/>
            <person name="Emes R.D."/>
            <person name="Winter E.E."/>
            <person name="Webber C."/>
            <person name="Brandt P."/>
            <person name="Nyakatura G."/>
            <person name="Adetobi M."/>
            <person name="Chiaromonte F."/>
            <person name="Elnitski L."/>
            <person name="Eswara P."/>
            <person name="Hardison R.C."/>
            <person name="Hou M."/>
            <person name="Kolbe D."/>
            <person name="Makova K."/>
            <person name="Miller W."/>
            <person name="Nekrutenko A."/>
            <person name="Riemer C."/>
            <person name="Schwartz S."/>
            <person name="Taylor J."/>
            <person name="Yang S."/>
            <person name="Zhang Y."/>
            <person name="Lindpaintner K."/>
            <person name="Andrews T.D."/>
            <person name="Caccamo M."/>
            <person name="Clamp M."/>
            <person name="Clarke L."/>
            <person name="Curwen V."/>
            <person name="Durbin R.M."/>
            <person name="Eyras E."/>
            <person name="Searle S.M."/>
            <person name="Cooper G.M."/>
            <person name="Batzoglou S."/>
            <person name="Brudno M."/>
            <person name="Sidow A."/>
            <person name="Stone E.A."/>
            <person name="Payseur B.A."/>
            <person name="Bourque G."/>
            <person name="Lopez-Otin C."/>
            <person name="Puente X.S."/>
            <person name="Chakrabarti K."/>
            <person name="Chatterji S."/>
            <person name="Dewey C."/>
            <person name="Pachter L."/>
            <person name="Bray N."/>
            <person name="Yap V.B."/>
            <person name="Caspi A."/>
            <person name="Tesler G."/>
            <person name="Pevzner P.A."/>
            <person name="Haussler D."/>
            <person name="Roskin K.M."/>
            <person name="Baertsch R."/>
            <person name="Clawson H."/>
            <person name="Furey T.S."/>
            <person name="Hinrichs A.S."/>
            <person name="Karolchik D."/>
            <person name="Kent W.J."/>
            <person name="Rosenbloom K.R."/>
            <person name="Trumbower H."/>
            <person name="Weirauch M."/>
            <person name="Cooper D.N."/>
            <person name="Stenson P.D."/>
            <person name="Ma B."/>
            <person name="Brent M."/>
            <person name="Arumugam M."/>
            <person name="Shteynberg D."/>
            <person name="Copley R.R."/>
            <person name="Taylor M.S."/>
            <person name="Riethman H."/>
            <person name="Mudunuri U."/>
            <person name="Peterson J."/>
            <person name="Guyer M."/>
            <person name="Felsenfeld A."/>
            <person name="Old S."/>
            <person name="Mockrin S."/>
            <person name="Collins F.S."/>
        </authorList>
    </citation>
    <scope>NUCLEOTIDE SEQUENCE [LARGE SCALE GENOMIC DNA]</scope>
    <source>
        <strain>Brown Norway</strain>
    </source>
</reference>
<reference key="3">
    <citation type="journal article" date="2004" name="Genome Res.">
        <title>The status, quality, and expansion of the NIH full-length cDNA project: the Mammalian Gene Collection (MGC).</title>
        <authorList>
            <consortium name="The MGC Project Team"/>
        </authorList>
    </citation>
    <scope>NUCLEOTIDE SEQUENCE [LARGE SCALE MRNA] (ISOFORM 2)</scope>
    <source>
        <strain>Brown Norway</strain>
        <tissue>Testis</tissue>
    </source>
</reference>
<reference key="4">
    <citation type="journal article" date="1993" name="Mol. Cell. Biol.">
        <title>Testis-specific mak protein kinase is expressed specifically in the meiotic phase in spermatogenesis and is associated with a 210-kilodalton cellular phosphoprotein.</title>
        <authorList>
            <person name="Jinno A."/>
            <person name="Tanaka K."/>
            <person name="Matsushime H."/>
            <person name="Haneji T."/>
            <person name="Shibuya M."/>
        </authorList>
    </citation>
    <scope>SUBCELLULAR LOCATION</scope>
    <scope>TISSUE SPECIFICITY</scope>
    <scope>DEVELOPMENTAL STAGE</scope>
    <scope>PHOSPHORYLATION</scope>
    <scope>ALTERNATIVE SPLICING</scope>
</reference>
<dbReference type="EC" id="2.7.11.1" evidence="2"/>
<dbReference type="EMBL" id="M35862">
    <property type="protein sequence ID" value="AAA41562.1"/>
    <property type="molecule type" value="mRNA"/>
</dbReference>
<dbReference type="EMBL" id="CH473977">
    <property type="protein sequence ID" value="EDL98222.1"/>
    <property type="molecule type" value="Genomic_DNA"/>
</dbReference>
<dbReference type="EMBL" id="BC078887">
    <property type="protein sequence ID" value="AAH78887.1"/>
    <property type="molecule type" value="mRNA"/>
</dbReference>
<dbReference type="PIR" id="A34711">
    <property type="entry name" value="A34711"/>
</dbReference>
<dbReference type="RefSeq" id="NP_037268.2">
    <molecule id="P20793-1"/>
    <property type="nucleotide sequence ID" value="NM_013136.3"/>
</dbReference>
<dbReference type="RefSeq" id="XP_038951317.1">
    <molecule id="P20793-1"/>
    <property type="nucleotide sequence ID" value="XM_039095389.2"/>
</dbReference>
<dbReference type="RefSeq" id="XP_038951319.1">
    <molecule id="P20793-1"/>
    <property type="nucleotide sequence ID" value="XM_039095391.2"/>
</dbReference>
<dbReference type="RefSeq" id="XP_038951323.1">
    <molecule id="P20793-2"/>
    <property type="nucleotide sequence ID" value="XM_039095395.2"/>
</dbReference>
<dbReference type="RefSeq" id="XP_063132182.1">
    <molecule id="P20793-2"/>
    <property type="nucleotide sequence ID" value="XM_063276112.1"/>
</dbReference>
<dbReference type="SMR" id="P20793"/>
<dbReference type="FunCoup" id="P20793">
    <property type="interactions" value="940"/>
</dbReference>
<dbReference type="STRING" id="10116.ENSRNOP00000020672"/>
<dbReference type="PhosphoSitePlus" id="P20793"/>
<dbReference type="PaxDb" id="10116-ENSRNOP00000020672"/>
<dbReference type="Ensembl" id="ENSRNOT00000020672.8">
    <molecule id="P20793-1"/>
    <property type="protein sequence ID" value="ENSRNOP00000020672.4"/>
    <property type="gene ID" value="ENSRNOG00000015101.9"/>
</dbReference>
<dbReference type="Ensembl" id="ENSRNOT00000107200.1">
    <molecule id="P20793-2"/>
    <property type="protein sequence ID" value="ENSRNOP00000079083.1"/>
    <property type="gene ID" value="ENSRNOG00000015101.9"/>
</dbReference>
<dbReference type="GeneID" id="25677"/>
<dbReference type="KEGG" id="rno:25677"/>
<dbReference type="UCSC" id="RGD:3036">
    <molecule id="P20793-1"/>
    <property type="organism name" value="rat"/>
</dbReference>
<dbReference type="AGR" id="RGD:3036"/>
<dbReference type="CTD" id="4117"/>
<dbReference type="RGD" id="3036">
    <property type="gene designation" value="Mak"/>
</dbReference>
<dbReference type="eggNOG" id="KOG0661">
    <property type="taxonomic scope" value="Eukaryota"/>
</dbReference>
<dbReference type="GeneTree" id="ENSGT00940000156581"/>
<dbReference type="HOGENOM" id="CLU_000288_181_25_1"/>
<dbReference type="InParanoid" id="P20793"/>
<dbReference type="BRENDA" id="2.7.11.22">
    <property type="organism ID" value="5301"/>
</dbReference>
<dbReference type="PRO" id="PR:P20793"/>
<dbReference type="Proteomes" id="UP000002494">
    <property type="component" value="Chromosome 17"/>
</dbReference>
<dbReference type="Proteomes" id="UP000234681">
    <property type="component" value="Chromosome 17"/>
</dbReference>
<dbReference type="Bgee" id="ENSRNOG00000015101">
    <property type="expression patterns" value="Expressed in testis and 3 other cell types or tissues"/>
</dbReference>
<dbReference type="GO" id="GO:0005930">
    <property type="term" value="C:axoneme"/>
    <property type="evidence" value="ECO:0000266"/>
    <property type="project" value="RGD"/>
</dbReference>
<dbReference type="GO" id="GO:0005813">
    <property type="term" value="C:centrosome"/>
    <property type="evidence" value="ECO:0000250"/>
    <property type="project" value="UniProtKB"/>
</dbReference>
<dbReference type="GO" id="GO:0005929">
    <property type="term" value="C:cilium"/>
    <property type="evidence" value="ECO:0000318"/>
    <property type="project" value="GO_Central"/>
</dbReference>
<dbReference type="GO" id="GO:0005737">
    <property type="term" value="C:cytoplasm"/>
    <property type="evidence" value="ECO:0000318"/>
    <property type="project" value="GO_Central"/>
</dbReference>
<dbReference type="GO" id="GO:0030496">
    <property type="term" value="C:midbody"/>
    <property type="evidence" value="ECO:0000250"/>
    <property type="project" value="UniProtKB"/>
</dbReference>
<dbReference type="GO" id="GO:0072686">
    <property type="term" value="C:mitotic spindle"/>
    <property type="evidence" value="ECO:0000250"/>
    <property type="project" value="UniProtKB"/>
</dbReference>
<dbReference type="GO" id="GO:0031514">
    <property type="term" value="C:motile cilium"/>
    <property type="evidence" value="ECO:0000266"/>
    <property type="project" value="RGD"/>
</dbReference>
<dbReference type="GO" id="GO:0005634">
    <property type="term" value="C:nucleus"/>
    <property type="evidence" value="ECO:0000250"/>
    <property type="project" value="UniProtKB"/>
</dbReference>
<dbReference type="GO" id="GO:0032391">
    <property type="term" value="C:photoreceptor connecting cilium"/>
    <property type="evidence" value="ECO:0000266"/>
    <property type="project" value="RGD"/>
</dbReference>
<dbReference type="GO" id="GO:0001917">
    <property type="term" value="C:photoreceptor inner segment"/>
    <property type="evidence" value="ECO:0000250"/>
    <property type="project" value="UniProtKB"/>
</dbReference>
<dbReference type="GO" id="GO:0001750">
    <property type="term" value="C:photoreceptor outer segment"/>
    <property type="evidence" value="ECO:0000250"/>
    <property type="project" value="UniProtKB"/>
</dbReference>
<dbReference type="GO" id="GO:0005524">
    <property type="term" value="F:ATP binding"/>
    <property type="evidence" value="ECO:0007669"/>
    <property type="project" value="UniProtKB-KW"/>
</dbReference>
<dbReference type="GO" id="GO:0046872">
    <property type="term" value="F:metal ion binding"/>
    <property type="evidence" value="ECO:0007669"/>
    <property type="project" value="UniProtKB-KW"/>
</dbReference>
<dbReference type="GO" id="GO:0106310">
    <property type="term" value="F:protein serine kinase activity"/>
    <property type="evidence" value="ECO:0007669"/>
    <property type="project" value="RHEA"/>
</dbReference>
<dbReference type="GO" id="GO:0004674">
    <property type="term" value="F:protein serine/threonine kinase activity"/>
    <property type="evidence" value="ECO:0000318"/>
    <property type="project" value="GO_Central"/>
</dbReference>
<dbReference type="GO" id="GO:0003713">
    <property type="term" value="F:transcription coactivator activity"/>
    <property type="evidence" value="ECO:0000250"/>
    <property type="project" value="UniProtKB"/>
</dbReference>
<dbReference type="GO" id="GO:0030154">
    <property type="term" value="P:cell differentiation"/>
    <property type="evidence" value="ECO:0007669"/>
    <property type="project" value="UniProtKB-KW"/>
</dbReference>
<dbReference type="GO" id="GO:0060271">
    <property type="term" value="P:cilium assembly"/>
    <property type="evidence" value="ECO:0000318"/>
    <property type="project" value="GO_Central"/>
</dbReference>
<dbReference type="GO" id="GO:0035556">
    <property type="term" value="P:intracellular signal transduction"/>
    <property type="evidence" value="ECO:0000318"/>
    <property type="project" value="GO_Central"/>
</dbReference>
<dbReference type="GO" id="GO:0042073">
    <property type="term" value="P:intraciliary transport"/>
    <property type="evidence" value="ECO:0000318"/>
    <property type="project" value="GO_Central"/>
</dbReference>
<dbReference type="GO" id="GO:1902856">
    <property type="term" value="P:negative regulation of non-motile cilium assembly"/>
    <property type="evidence" value="ECO:0000266"/>
    <property type="project" value="RGD"/>
</dbReference>
<dbReference type="GO" id="GO:1905515">
    <property type="term" value="P:non-motile cilium assembly"/>
    <property type="evidence" value="ECO:0000266"/>
    <property type="project" value="RGD"/>
</dbReference>
<dbReference type="GO" id="GO:0045494">
    <property type="term" value="P:photoreceptor cell maintenance"/>
    <property type="evidence" value="ECO:0000250"/>
    <property type="project" value="UniProtKB"/>
</dbReference>
<dbReference type="GO" id="GO:0046777">
    <property type="term" value="P:protein autophosphorylation"/>
    <property type="evidence" value="ECO:0000250"/>
    <property type="project" value="UniProtKB"/>
</dbReference>
<dbReference type="GO" id="GO:0006468">
    <property type="term" value="P:protein phosphorylation"/>
    <property type="evidence" value="ECO:0000250"/>
    <property type="project" value="UniProtKB"/>
</dbReference>
<dbReference type="GO" id="GO:0007283">
    <property type="term" value="P:spermatogenesis"/>
    <property type="evidence" value="ECO:0007669"/>
    <property type="project" value="UniProtKB-KW"/>
</dbReference>
<dbReference type="CDD" id="cd07830">
    <property type="entry name" value="STKc_MAK_like"/>
    <property type="match status" value="1"/>
</dbReference>
<dbReference type="FunFam" id="1.10.510.10:FF:000104">
    <property type="entry name" value="serine/threonine-protein kinase MAK isoform X1"/>
    <property type="match status" value="1"/>
</dbReference>
<dbReference type="FunFam" id="3.30.200.20:FF:000071">
    <property type="entry name" value="serine/threonine-protein kinase MAK isoform X1"/>
    <property type="match status" value="1"/>
</dbReference>
<dbReference type="Gene3D" id="3.30.200.20">
    <property type="entry name" value="Phosphorylase Kinase, domain 1"/>
    <property type="match status" value="1"/>
</dbReference>
<dbReference type="Gene3D" id="1.10.510.10">
    <property type="entry name" value="Transferase(Phosphotransferase) domain 1"/>
    <property type="match status" value="1"/>
</dbReference>
<dbReference type="InterPro" id="IPR011009">
    <property type="entry name" value="Kinase-like_dom_sf"/>
</dbReference>
<dbReference type="InterPro" id="IPR050117">
    <property type="entry name" value="MAP_kinase"/>
</dbReference>
<dbReference type="InterPro" id="IPR000719">
    <property type="entry name" value="Prot_kinase_dom"/>
</dbReference>
<dbReference type="InterPro" id="IPR017441">
    <property type="entry name" value="Protein_kinase_ATP_BS"/>
</dbReference>
<dbReference type="InterPro" id="IPR008271">
    <property type="entry name" value="Ser/Thr_kinase_AS"/>
</dbReference>
<dbReference type="PANTHER" id="PTHR24055">
    <property type="entry name" value="MITOGEN-ACTIVATED PROTEIN KINASE"/>
    <property type="match status" value="1"/>
</dbReference>
<dbReference type="Pfam" id="PF00069">
    <property type="entry name" value="Pkinase"/>
    <property type="match status" value="1"/>
</dbReference>
<dbReference type="SMART" id="SM00220">
    <property type="entry name" value="S_TKc"/>
    <property type="match status" value="1"/>
</dbReference>
<dbReference type="SUPFAM" id="SSF56112">
    <property type="entry name" value="Protein kinase-like (PK-like)"/>
    <property type="match status" value="1"/>
</dbReference>
<dbReference type="PROSITE" id="PS00107">
    <property type="entry name" value="PROTEIN_KINASE_ATP"/>
    <property type="match status" value="1"/>
</dbReference>
<dbReference type="PROSITE" id="PS50011">
    <property type="entry name" value="PROTEIN_KINASE_DOM"/>
    <property type="match status" value="1"/>
</dbReference>
<dbReference type="PROSITE" id="PS00108">
    <property type="entry name" value="PROTEIN_KINASE_ST"/>
    <property type="match status" value="1"/>
</dbReference>
<accession>P20793</accession>
<accession>G3V7Y4</accession>
<accession>Q6AYW0</accession>
<feature type="chain" id="PRO_0000086286" description="Serine/threonine-protein kinase MAK">
    <location>
        <begin position="1"/>
        <end position="622"/>
    </location>
</feature>
<feature type="domain" description="Protein kinase" evidence="3">
    <location>
        <begin position="4"/>
        <end position="284"/>
    </location>
</feature>
<feature type="region of interest" description="Disordered" evidence="5">
    <location>
        <begin position="301"/>
        <end position="373"/>
    </location>
</feature>
<feature type="active site" description="Proton acceptor" evidence="3 4">
    <location>
        <position position="125"/>
    </location>
</feature>
<feature type="binding site" evidence="3">
    <location>
        <begin position="10"/>
        <end position="18"/>
    </location>
    <ligand>
        <name>ATP</name>
        <dbReference type="ChEBI" id="CHEBI:30616"/>
    </ligand>
</feature>
<feature type="binding site" evidence="3">
    <location>
        <position position="33"/>
    </location>
    <ligand>
        <name>ATP</name>
        <dbReference type="ChEBI" id="CHEBI:30616"/>
    </ligand>
</feature>
<feature type="modified residue" description="Phosphothreonine; by autocatalysis" evidence="2">
    <location>
        <position position="157"/>
    </location>
</feature>
<feature type="modified residue" description="Phosphotyrosine; by autocatalysis" evidence="2">
    <location>
        <position position="159"/>
    </location>
</feature>
<feature type="splice variant" id="VSP_042475" description="In isoform 2." evidence="8">
    <location>
        <begin position="531"/>
        <end position="571"/>
    </location>
</feature>
<feature type="sequence conflict" description="In Ref. 1; AAA41562." evidence="9" ref="1">
    <original>Q</original>
    <variation>R</variation>
    <location>
        <position position="581"/>
    </location>
</feature>
<protein>
    <recommendedName>
        <fullName>Serine/threonine-protein kinase MAK</fullName>
        <ecNumber evidence="2">2.7.11.1</ecNumber>
    </recommendedName>
    <alternativeName>
        <fullName>Male germ cell-associated kinase</fullName>
    </alternativeName>
</protein>
<evidence type="ECO:0000250" key="1"/>
<evidence type="ECO:0000250" key="2">
    <source>
        <dbReference type="UniProtKB" id="P20794"/>
    </source>
</evidence>
<evidence type="ECO:0000255" key="3">
    <source>
        <dbReference type="PROSITE-ProRule" id="PRU00159"/>
    </source>
</evidence>
<evidence type="ECO:0000255" key="4">
    <source>
        <dbReference type="PROSITE-ProRule" id="PRU10027"/>
    </source>
</evidence>
<evidence type="ECO:0000256" key="5">
    <source>
        <dbReference type="SAM" id="MobiDB-lite"/>
    </source>
</evidence>
<evidence type="ECO:0000269" key="6">
    <source>
    </source>
</evidence>
<evidence type="ECO:0000269" key="7">
    <source>
    </source>
</evidence>
<evidence type="ECO:0000303" key="8">
    <source>
    </source>
</evidence>
<evidence type="ECO:0000305" key="9"/>
<proteinExistence type="evidence at protein level"/>
<gene>
    <name type="primary">Mak</name>
</gene>
<comment type="function">
    <text evidence="1 6">Essential for the regulation of ciliary length and required for the long-term survival of photoreceptors (By similarity). Could play an important function in spermatogenesis. Phosphorylates FZR1 in a cell cycle-dependent manner (By similarity). Plays a role in the transcriptional coactivation of AR (By similarity).</text>
</comment>
<comment type="catalytic activity">
    <reaction evidence="2">
        <text>L-seryl-[protein] + ATP = O-phospho-L-seryl-[protein] + ADP + H(+)</text>
        <dbReference type="Rhea" id="RHEA:17989"/>
        <dbReference type="Rhea" id="RHEA-COMP:9863"/>
        <dbReference type="Rhea" id="RHEA-COMP:11604"/>
        <dbReference type="ChEBI" id="CHEBI:15378"/>
        <dbReference type="ChEBI" id="CHEBI:29999"/>
        <dbReference type="ChEBI" id="CHEBI:30616"/>
        <dbReference type="ChEBI" id="CHEBI:83421"/>
        <dbReference type="ChEBI" id="CHEBI:456216"/>
        <dbReference type="EC" id="2.7.11.1"/>
    </reaction>
</comment>
<comment type="catalytic activity">
    <reaction evidence="2">
        <text>L-threonyl-[protein] + ATP = O-phospho-L-threonyl-[protein] + ADP + H(+)</text>
        <dbReference type="Rhea" id="RHEA:46608"/>
        <dbReference type="Rhea" id="RHEA-COMP:11060"/>
        <dbReference type="Rhea" id="RHEA-COMP:11605"/>
        <dbReference type="ChEBI" id="CHEBI:15378"/>
        <dbReference type="ChEBI" id="CHEBI:30013"/>
        <dbReference type="ChEBI" id="CHEBI:30616"/>
        <dbReference type="ChEBI" id="CHEBI:61977"/>
        <dbReference type="ChEBI" id="CHEBI:456216"/>
        <dbReference type="EC" id="2.7.11.1"/>
    </reaction>
</comment>
<comment type="cofactor">
    <cofactor evidence="2">
        <name>Mg(2+)</name>
        <dbReference type="ChEBI" id="CHEBI:18420"/>
    </cofactor>
</comment>
<comment type="subunit">
    <text evidence="1">Interacts with RP1. Interacts with AR and CDK20. Found in a complex containing MAK, AR and NCOA3. Interacts with FZR1 (via WD repeats) (By similarity).</text>
</comment>
<comment type="subcellular location">
    <subcellularLocation>
        <location evidence="1">Nucleus</location>
    </subcellularLocation>
    <subcellularLocation>
        <location evidence="7">Cytoplasm</location>
    </subcellularLocation>
    <subcellularLocation>
        <location evidence="1">Cytoplasm</location>
        <location evidence="1">Cytoskeleton</location>
        <location evidence="1">Microtubule organizing center</location>
        <location evidence="1">Centrosome</location>
    </subcellularLocation>
    <subcellularLocation>
        <location evidence="1">Cytoplasm</location>
        <location evidence="1">Cytoskeleton</location>
        <location evidence="1">Spindle</location>
    </subcellularLocation>
    <subcellularLocation>
        <location evidence="1">Midbody</location>
    </subcellularLocation>
    <subcellularLocation>
        <location evidence="1">Cell projection</location>
        <location evidence="1">Cilium</location>
        <location evidence="1">Photoreceptor outer segment</location>
    </subcellularLocation>
    <subcellularLocation>
        <location evidence="1">Photoreceptor inner segment</location>
    </subcellularLocation>
    <text evidence="1">Localized in both the connecting cilia and the outer segment axonemes.</text>
</comment>
<comment type="alternative products">
    <event type="alternative splicing"/>
    <isoform>
        <id>P20793-1</id>
        <name>1</name>
        <sequence type="displayed"/>
    </isoform>
    <isoform>
        <id>P20793-2</id>
        <name>2</name>
        <sequence type="described" ref="VSP_042475"/>
    </isoform>
</comment>
<comment type="tissue specificity">
    <text evidence="6 7">Expressed mainly in testicular cells at and after meiosis.</text>
</comment>
<comment type="developmental stage">
    <text evidence="7">Expression in testis is detected 16 days after birth and increases gradually to reach a plateau about 4 weeks after birth (at protein level).</text>
</comment>
<comment type="PTM">
    <text evidence="1 7">Autophosphorylated (By similarity). Phosphorylated on serine and threonine residues.</text>
</comment>
<comment type="similarity">
    <text evidence="9">Belongs to the protein kinase superfamily. CMGC Ser/Thr protein kinase family. CDC2/CDKX subfamily.</text>
</comment>
<keyword id="KW-0025">Alternative splicing</keyword>
<keyword id="KW-0067">ATP-binding</keyword>
<keyword id="KW-0966">Cell projection</keyword>
<keyword id="KW-0969">Cilium</keyword>
<keyword id="KW-0963">Cytoplasm</keyword>
<keyword id="KW-0206">Cytoskeleton</keyword>
<keyword id="KW-0217">Developmental protein</keyword>
<keyword id="KW-0221">Differentiation</keyword>
<keyword id="KW-0418">Kinase</keyword>
<keyword id="KW-0460">Magnesium</keyword>
<keyword id="KW-0479">Metal-binding</keyword>
<keyword id="KW-0547">Nucleotide-binding</keyword>
<keyword id="KW-0539">Nucleus</keyword>
<keyword id="KW-0597">Phosphoprotein</keyword>
<keyword id="KW-1185">Reference proteome</keyword>
<keyword id="KW-0723">Serine/threonine-protein kinase</keyword>
<keyword id="KW-0744">Spermatogenesis</keyword>
<keyword id="KW-0804">Transcription</keyword>
<keyword id="KW-0805">Transcription regulation</keyword>
<keyword id="KW-0808">Transferase</keyword>
<organism>
    <name type="scientific">Rattus norvegicus</name>
    <name type="common">Rat</name>
    <dbReference type="NCBI Taxonomy" id="10116"/>
    <lineage>
        <taxon>Eukaryota</taxon>
        <taxon>Metazoa</taxon>
        <taxon>Chordata</taxon>
        <taxon>Craniata</taxon>
        <taxon>Vertebrata</taxon>
        <taxon>Euteleostomi</taxon>
        <taxon>Mammalia</taxon>
        <taxon>Eutheria</taxon>
        <taxon>Euarchontoglires</taxon>
        <taxon>Glires</taxon>
        <taxon>Rodentia</taxon>
        <taxon>Myomorpha</taxon>
        <taxon>Muroidea</taxon>
        <taxon>Muridae</taxon>
        <taxon>Murinae</taxon>
        <taxon>Rattus</taxon>
    </lineage>
</organism>